<comment type="function">
    <text evidence="1 2">Catalytic component of the signal peptidase complex (SPC) which catalyzes the cleavage of N-terminal signal sequences from nascent proteins as they are translocated into the lumen of the endoplasmic reticulum (By similarity). Specifically cleaves N-terminal signal peptides that contain a hydrophobic alpha-helix (h-region) shorter than 18-20 amino acids (By similarity).</text>
</comment>
<comment type="catalytic activity">
    <reaction evidence="1">
        <text>Cleavage of hydrophobic, N-terminal signal or leader sequences from secreted and periplasmic proteins.</text>
        <dbReference type="EC" id="3.4.21.89"/>
    </reaction>
</comment>
<comment type="subunit">
    <text evidence="1 2">Component of the signal peptidase complex (SPC) composed of a catalytic subunit SEC11 and three accessory subunits SPC1, SPC2 and SPC3 (By similarity). The complex induces a local thinning of the ER membrane which is used to measure the length of the signal peptide (SP) h-region of protein substrates. This ensures the selectivity of the complex towards h-regions shorter than 18-20 amino acids (By similarity). SPC associates with the translocon complex (By similarity).</text>
</comment>
<comment type="subcellular location">
    <subcellularLocation>
        <location evidence="1">Endoplasmic reticulum membrane</location>
        <topology evidence="1">Single-pass type II membrane protein</topology>
    </subcellularLocation>
</comment>
<comment type="domain">
    <text evidence="2">The C-terminal short (CTS) helix is essential for catalytic activity. It may be accommodated as a transmembrane helix in the thinned membrane environment of the complex, similarly to the signal peptide in the complex substrates.</text>
</comment>
<comment type="similarity">
    <text evidence="4">Belongs to the peptidase S26B family.</text>
</comment>
<feature type="chain" id="PRO_0000412369" description="Signal peptidase complex catalytic subunit SEC11">
    <location>
        <begin position="1"/>
        <end position="186"/>
    </location>
</feature>
<feature type="topological domain" description="Cytoplasmic" evidence="4">
    <location>
        <begin position="1"/>
        <end position="20"/>
    </location>
</feature>
<feature type="transmembrane region" description="Helical; Signal-anchor for type II membrane protein" evidence="3">
    <location>
        <begin position="21"/>
        <end position="41"/>
    </location>
</feature>
<feature type="topological domain" description="Lumenal" evidence="4">
    <location>
        <begin position="42"/>
        <end position="186"/>
    </location>
</feature>
<feature type="region of interest" description="C-terminal short (CTS) helix" evidence="2">
    <location>
        <begin position="172"/>
        <end position="183"/>
    </location>
</feature>
<feature type="active site" description="Charge relay system" evidence="1">
    <location>
        <position position="55"/>
    </location>
</feature>
<feature type="active site" description="Charge relay system" evidence="1">
    <location>
        <position position="102"/>
    </location>
</feature>
<feature type="active site" description="Charge relay system" evidence="1">
    <location>
        <position position="128"/>
    </location>
</feature>
<keyword id="KW-0256">Endoplasmic reticulum</keyword>
<keyword id="KW-0378">Hydrolase</keyword>
<keyword id="KW-0472">Membrane</keyword>
<keyword id="KW-0645">Protease</keyword>
<keyword id="KW-1185">Reference proteome</keyword>
<keyword id="KW-0735">Signal-anchor</keyword>
<keyword id="KW-0812">Transmembrane</keyword>
<keyword id="KW-1133">Transmembrane helix</keyword>
<gene>
    <name type="primary">SEC11</name>
    <name type="ORF">GSTUM_00011219001</name>
</gene>
<sequence length="186" mass="20817">MDALGLSKLRHLKPRQLLSQVLNFALILSTAFMLWKGLSVATDSPSPIVVVLSGSMEPAFQRGDLLFLWNRNLELDSPPTPGTRVGEIVVYNVIGKDIPIVHRVVRKHQGPKTPLHLLTKGDNNHADDTELYARGRWYLDREKEVIGSVVGYVPFVGYVTIMLSEHPWMKTALLGIMGLLVIVQRE</sequence>
<evidence type="ECO:0000250" key="1">
    <source>
        <dbReference type="UniProtKB" id="P15367"/>
    </source>
</evidence>
<evidence type="ECO:0000250" key="2">
    <source>
        <dbReference type="UniProtKB" id="P67812"/>
    </source>
</evidence>
<evidence type="ECO:0000255" key="3"/>
<evidence type="ECO:0000305" key="4"/>
<accession>D5GNC3</accession>
<dbReference type="EC" id="3.4.21.89" evidence="1"/>
<dbReference type="EMBL" id="FN430363">
    <property type="protein sequence ID" value="CAZ86016.1"/>
    <property type="molecule type" value="Genomic_DNA"/>
</dbReference>
<dbReference type="RefSeq" id="XP_002841825.1">
    <property type="nucleotide sequence ID" value="XM_002841779.1"/>
</dbReference>
<dbReference type="SMR" id="D5GNC3"/>
<dbReference type="FunCoup" id="D5GNC3">
    <property type="interactions" value="637"/>
</dbReference>
<dbReference type="STRING" id="656061.D5GNC3"/>
<dbReference type="MEROPS" id="S26.010"/>
<dbReference type="EnsemblFungi" id="CAZ86016">
    <property type="protein sequence ID" value="CAZ86016"/>
    <property type="gene ID" value="GSTUM_00011219001"/>
</dbReference>
<dbReference type="GeneID" id="9182216"/>
<dbReference type="KEGG" id="tml:GSTUM_00011219001"/>
<dbReference type="eggNOG" id="KOG3342">
    <property type="taxonomic scope" value="Eukaryota"/>
</dbReference>
<dbReference type="HOGENOM" id="CLU_089996_0_0_1"/>
<dbReference type="InParanoid" id="D5GNC3"/>
<dbReference type="OMA" id="ILMNEYP"/>
<dbReference type="Proteomes" id="UP000006911">
    <property type="component" value="Unassembled WGS sequence"/>
</dbReference>
<dbReference type="GO" id="GO:0005787">
    <property type="term" value="C:signal peptidase complex"/>
    <property type="evidence" value="ECO:0007669"/>
    <property type="project" value="EnsemblFungi"/>
</dbReference>
<dbReference type="GO" id="GO:0004252">
    <property type="term" value="F:serine-type endopeptidase activity"/>
    <property type="evidence" value="ECO:0007669"/>
    <property type="project" value="UniProtKB-EC"/>
</dbReference>
<dbReference type="GO" id="GO:0045047">
    <property type="term" value="P:protein targeting to ER"/>
    <property type="evidence" value="ECO:0007669"/>
    <property type="project" value="EnsemblFungi"/>
</dbReference>
<dbReference type="GO" id="GO:0006465">
    <property type="term" value="P:signal peptide processing"/>
    <property type="evidence" value="ECO:0007669"/>
    <property type="project" value="EnsemblFungi"/>
</dbReference>
<dbReference type="CDD" id="cd06530">
    <property type="entry name" value="S26_SPase_I"/>
    <property type="match status" value="1"/>
</dbReference>
<dbReference type="InterPro" id="IPR036286">
    <property type="entry name" value="LexA/Signal_pep-like_sf"/>
</dbReference>
<dbReference type="InterPro" id="IPR019756">
    <property type="entry name" value="Pept_S26A_signal_pept_1_Ser-AS"/>
</dbReference>
<dbReference type="InterPro" id="IPR019533">
    <property type="entry name" value="Peptidase_S26"/>
</dbReference>
<dbReference type="InterPro" id="IPR001733">
    <property type="entry name" value="Peptidase_S26B"/>
</dbReference>
<dbReference type="NCBIfam" id="TIGR02228">
    <property type="entry name" value="sigpep_I_arch"/>
    <property type="match status" value="1"/>
</dbReference>
<dbReference type="PANTHER" id="PTHR10806">
    <property type="entry name" value="SIGNAL PEPTIDASE COMPLEX CATALYTIC SUBUNIT SEC11"/>
    <property type="match status" value="1"/>
</dbReference>
<dbReference type="PANTHER" id="PTHR10806:SF6">
    <property type="entry name" value="SIGNAL PEPTIDASE COMPLEX CATALYTIC SUBUNIT SEC11"/>
    <property type="match status" value="1"/>
</dbReference>
<dbReference type="PRINTS" id="PR00728">
    <property type="entry name" value="SIGNALPTASE"/>
</dbReference>
<dbReference type="SUPFAM" id="SSF51306">
    <property type="entry name" value="LexA/Signal peptidase"/>
    <property type="match status" value="1"/>
</dbReference>
<dbReference type="PROSITE" id="PS00501">
    <property type="entry name" value="SPASE_I_1"/>
    <property type="match status" value="1"/>
</dbReference>
<reference key="1">
    <citation type="journal article" date="2010" name="Nature">
        <title>Perigord black truffle genome uncovers evolutionary origins and mechanisms of symbiosis.</title>
        <authorList>
            <person name="Martin F."/>
            <person name="Kohler A."/>
            <person name="Murat C."/>
            <person name="Balestrini R."/>
            <person name="Coutinho P.M."/>
            <person name="Jaillon O."/>
            <person name="Montanini B."/>
            <person name="Morin E."/>
            <person name="Noel B."/>
            <person name="Percudani R."/>
            <person name="Porcel B."/>
            <person name="Rubini A."/>
            <person name="Amicucci A."/>
            <person name="Amselem J."/>
            <person name="Anthouard V."/>
            <person name="Arcioni S."/>
            <person name="Artiguenave F."/>
            <person name="Aury J.M."/>
            <person name="Ballario P."/>
            <person name="Bolchi A."/>
            <person name="Brenna A."/>
            <person name="Brun A."/>
            <person name="Buee M."/>
            <person name="Cantarel B."/>
            <person name="Chevalier G."/>
            <person name="Couloux A."/>
            <person name="Da Silva C."/>
            <person name="Denoeud F."/>
            <person name="Duplessis S."/>
            <person name="Ghignone S."/>
            <person name="Hilselberger B."/>
            <person name="Iotti M."/>
            <person name="Marcais B."/>
            <person name="Mello A."/>
            <person name="Miranda M."/>
            <person name="Pacioni G."/>
            <person name="Quesneville H."/>
            <person name="Riccioni C."/>
            <person name="Ruotolo R."/>
            <person name="Splivallo R."/>
            <person name="Stocchi V."/>
            <person name="Tisserant E."/>
            <person name="Viscomi A.R."/>
            <person name="Zambonelli A."/>
            <person name="Zampieri E."/>
            <person name="Henrissat B."/>
            <person name="Lebrun M.H."/>
            <person name="Paolocci F."/>
            <person name="Bonfante P."/>
            <person name="Ottonello S."/>
            <person name="Wincker P."/>
        </authorList>
    </citation>
    <scope>NUCLEOTIDE SEQUENCE [LARGE SCALE GENOMIC DNA]</scope>
    <source>
        <strain>Mel28</strain>
    </source>
</reference>
<organism>
    <name type="scientific">Tuber melanosporum (strain Mel28)</name>
    <name type="common">Perigord black truffle</name>
    <dbReference type="NCBI Taxonomy" id="656061"/>
    <lineage>
        <taxon>Eukaryota</taxon>
        <taxon>Fungi</taxon>
        <taxon>Dikarya</taxon>
        <taxon>Ascomycota</taxon>
        <taxon>Pezizomycotina</taxon>
        <taxon>Pezizomycetes</taxon>
        <taxon>Pezizales</taxon>
        <taxon>Tuberaceae</taxon>
        <taxon>Tuber</taxon>
    </lineage>
</organism>
<protein>
    <recommendedName>
        <fullName>Signal peptidase complex catalytic subunit SEC11</fullName>
        <ecNumber evidence="1">3.4.21.89</ecNumber>
    </recommendedName>
    <alternativeName>
        <fullName>Signal peptidase I</fullName>
    </alternativeName>
</protein>
<proteinExistence type="inferred from homology"/>
<name>SEC11_TUBMM</name>